<keyword id="KW-1003">Cell membrane</keyword>
<keyword id="KW-0472">Membrane</keyword>
<keyword id="KW-1185">Reference proteome</keyword>
<keyword id="KW-0812">Transmembrane</keyword>
<keyword id="KW-1133">Transmembrane helix</keyword>
<proteinExistence type="predicted"/>
<dbReference type="EMBL" id="AE005174">
    <property type="protein sequence ID" value="AAG56814.1"/>
    <property type="molecule type" value="Genomic_DNA"/>
</dbReference>
<dbReference type="EMBL" id="BA000007">
    <property type="protein sequence ID" value="BAB35958.1"/>
    <property type="molecule type" value="Genomic_DNA"/>
</dbReference>
<dbReference type="PIR" id="B85794">
    <property type="entry name" value="B85794"/>
</dbReference>
<dbReference type="PIR" id="G90945">
    <property type="entry name" value="G90945"/>
</dbReference>
<dbReference type="RefSeq" id="NP_310562.1">
    <property type="nucleotide sequence ID" value="NC_002695.1"/>
</dbReference>
<dbReference type="RefSeq" id="WP_001006862.1">
    <property type="nucleotide sequence ID" value="NZ_VOAI01000010.1"/>
</dbReference>
<dbReference type="SMR" id="Q8XCN8"/>
<dbReference type="STRING" id="155864.Z2871"/>
<dbReference type="GeneID" id="912296"/>
<dbReference type="KEGG" id="ece:Z2871"/>
<dbReference type="KEGG" id="ecs:ECs_2535"/>
<dbReference type="PATRIC" id="fig|386585.9.peg.2657"/>
<dbReference type="eggNOG" id="ENOG5032S3N">
    <property type="taxonomic scope" value="Bacteria"/>
</dbReference>
<dbReference type="HOGENOM" id="CLU_165389_1_0_6"/>
<dbReference type="OMA" id="VLWFFVN"/>
<dbReference type="Proteomes" id="UP000000558">
    <property type="component" value="Chromosome"/>
</dbReference>
<dbReference type="Proteomes" id="UP000002519">
    <property type="component" value="Chromosome"/>
</dbReference>
<dbReference type="GO" id="GO:0005886">
    <property type="term" value="C:plasma membrane"/>
    <property type="evidence" value="ECO:0007669"/>
    <property type="project" value="UniProtKB-SubCell"/>
</dbReference>
<dbReference type="InterPro" id="IPR025594">
    <property type="entry name" value="YebO"/>
</dbReference>
<dbReference type="Pfam" id="PF13974">
    <property type="entry name" value="YebO"/>
    <property type="match status" value="1"/>
</dbReference>
<sequence>MNEVVNSGVMNIASLVVSVVVLLIGLILWFFINRASSRTNEQIELLEALLDQQKRQNALLRRLCEANEPEKADKKTIESQKSVEDEDIIRLVAER</sequence>
<reference key="1">
    <citation type="journal article" date="2001" name="Nature">
        <title>Genome sequence of enterohaemorrhagic Escherichia coli O157:H7.</title>
        <authorList>
            <person name="Perna N.T."/>
            <person name="Plunkett G. III"/>
            <person name="Burland V."/>
            <person name="Mau B."/>
            <person name="Glasner J.D."/>
            <person name="Rose D.J."/>
            <person name="Mayhew G.F."/>
            <person name="Evans P.S."/>
            <person name="Gregor J."/>
            <person name="Kirkpatrick H.A."/>
            <person name="Posfai G."/>
            <person name="Hackett J."/>
            <person name="Klink S."/>
            <person name="Boutin A."/>
            <person name="Shao Y."/>
            <person name="Miller L."/>
            <person name="Grotbeck E.J."/>
            <person name="Davis N.W."/>
            <person name="Lim A."/>
            <person name="Dimalanta E.T."/>
            <person name="Potamousis K."/>
            <person name="Apodaca J."/>
            <person name="Anantharaman T.S."/>
            <person name="Lin J."/>
            <person name="Yen G."/>
            <person name="Schwartz D.C."/>
            <person name="Welch R.A."/>
            <person name="Blattner F.R."/>
        </authorList>
    </citation>
    <scope>NUCLEOTIDE SEQUENCE [LARGE SCALE GENOMIC DNA]</scope>
    <source>
        <strain>O157:H7 / EDL933 / ATCC 700927 / EHEC</strain>
    </source>
</reference>
<reference key="2">
    <citation type="journal article" date="2001" name="DNA Res.">
        <title>Complete genome sequence of enterohemorrhagic Escherichia coli O157:H7 and genomic comparison with a laboratory strain K-12.</title>
        <authorList>
            <person name="Hayashi T."/>
            <person name="Makino K."/>
            <person name="Ohnishi M."/>
            <person name="Kurokawa K."/>
            <person name="Ishii K."/>
            <person name="Yokoyama K."/>
            <person name="Han C.-G."/>
            <person name="Ohtsubo E."/>
            <person name="Nakayama K."/>
            <person name="Murata T."/>
            <person name="Tanaka M."/>
            <person name="Tobe T."/>
            <person name="Iida T."/>
            <person name="Takami H."/>
            <person name="Honda T."/>
            <person name="Sasakawa C."/>
            <person name="Ogasawara N."/>
            <person name="Yasunaga T."/>
            <person name="Kuhara S."/>
            <person name="Shiba T."/>
            <person name="Hattori M."/>
            <person name="Shinagawa H."/>
        </authorList>
    </citation>
    <scope>NUCLEOTIDE SEQUENCE [LARGE SCALE GENOMIC DNA]</scope>
    <source>
        <strain>O157:H7 / Sakai / RIMD 0509952 / EHEC</strain>
    </source>
</reference>
<name>YEBO_ECO57</name>
<evidence type="ECO:0000255" key="1"/>
<evidence type="ECO:0000305" key="2"/>
<protein>
    <recommendedName>
        <fullName>Uncharacterized protein YebO</fullName>
    </recommendedName>
</protein>
<organism>
    <name type="scientific">Escherichia coli O157:H7</name>
    <dbReference type="NCBI Taxonomy" id="83334"/>
    <lineage>
        <taxon>Bacteria</taxon>
        <taxon>Pseudomonadati</taxon>
        <taxon>Pseudomonadota</taxon>
        <taxon>Gammaproteobacteria</taxon>
        <taxon>Enterobacterales</taxon>
        <taxon>Enterobacteriaceae</taxon>
        <taxon>Escherichia</taxon>
    </lineage>
</organism>
<accession>Q8XCN8</accession>
<gene>
    <name type="primary">yebO</name>
    <name type="ordered locus">Z2871</name>
    <name type="ordered locus">ECs2535</name>
</gene>
<comment type="subcellular location">
    <subcellularLocation>
        <location evidence="2">Cell membrane</location>
        <topology evidence="2">Single-pass membrane protein</topology>
    </subcellularLocation>
</comment>
<feature type="chain" id="PRO_0000169047" description="Uncharacterized protein YebO">
    <location>
        <begin position="1"/>
        <end position="95"/>
    </location>
</feature>
<feature type="transmembrane region" description="Helical" evidence="1">
    <location>
        <begin position="12"/>
        <end position="32"/>
    </location>
</feature>